<sequence length="278" mass="29987">MRLKHPTARLALAALLVAVPRSVAAAGTVHAAPAPAGATRLAAVGLDDPHKKDIAMQLVSSAENSSLDWKSQYKYIEDIKDGRGYTAGIIGFCSGTGDMLDLVADYTDLKPGNILAKYLPALRKVNGTESHAGLASAFEKDWATAAKDSVFQQAQNDERDRSYFNPAVNQAKASLRALGQFAYYDAIVMHGPGDSSDSFGGIRKAAMKKAKTPAQGRDEATYLKAFLAARKTVMLKEEAHSDTSRVDTEQTVFLNAKNFDLNPPLKWKVYGDSYAINS</sequence>
<organism>
    <name type="scientific">Nocardioides sp. (strain N106)</name>
    <dbReference type="NCBI Taxonomy" id="47919"/>
    <lineage>
        <taxon>Bacteria</taxon>
        <taxon>Bacillati</taxon>
        <taxon>Actinomycetota</taxon>
        <taxon>Actinomycetes</taxon>
        <taxon>Propionibacteriales</taxon>
        <taxon>Nocardioidaceae</taxon>
        <taxon>Nocardioides</taxon>
    </lineage>
</organism>
<name>CHIS_NOCSP</name>
<evidence type="ECO:0000250" key="1"/>
<evidence type="ECO:0000255" key="2"/>
<evidence type="ECO:0000255" key="3">
    <source>
        <dbReference type="PROSITE-ProRule" id="PRU10070"/>
    </source>
</evidence>
<evidence type="ECO:0000305" key="4"/>
<comment type="function">
    <text>Aids in the defense against invading fungal pathogens by degrading their cell wall chitosan.</text>
</comment>
<comment type="catalytic activity">
    <reaction>
        <text>Endohydrolysis of beta-(1-&gt;4)-linkages between D-glucosamine residues in a partly acetylated chitosan.</text>
        <dbReference type="EC" id="3.2.1.132"/>
    </reaction>
</comment>
<comment type="subcellular location">
    <subcellularLocation>
        <location evidence="1">Secreted</location>
    </subcellularLocation>
</comment>
<comment type="similarity">
    <text evidence="4">Belongs to the glycosyl hydrolase 46 family.</text>
</comment>
<reference key="1">
    <citation type="journal article" date="1995" name="Microbiology">
        <title>A new chitosanase gene from a Nocardioides sp. is a third member of glycosyl hydrolase family 46.</title>
        <authorList>
            <person name="Masson J.Y."/>
            <person name="Boucher I."/>
            <person name="Neugebauer W.A."/>
            <person name="Ramotar D."/>
            <person name="Brzezinski R."/>
        </authorList>
    </citation>
    <scope>NUCLEOTIDE SEQUENCE [GENOMIC DNA]</scope>
</reference>
<feature type="signal peptide" evidence="2">
    <location>
        <begin position="1"/>
        <end position="41"/>
    </location>
</feature>
<feature type="chain" id="PRO_0000012208" description="Chitosanase">
    <location>
        <begin position="42"/>
        <end position="278"/>
    </location>
</feature>
<feature type="active site" description="Proton donor" evidence="3">
    <location>
        <position position="63"/>
    </location>
</feature>
<feature type="active site" description="Nucleophile" evidence="1">
    <location>
        <position position="81"/>
    </location>
</feature>
<gene>
    <name type="primary">csn</name>
</gene>
<accession>P48846</accession>
<proteinExistence type="inferred from homology"/>
<keyword id="KW-0326">Glycosidase</keyword>
<keyword id="KW-0378">Hydrolase</keyword>
<keyword id="KW-0964">Secreted</keyword>
<keyword id="KW-0732">Signal</keyword>
<protein>
    <recommendedName>
        <fullName>Chitosanase</fullName>
        <ecNumber>3.2.1.132</ecNumber>
    </recommendedName>
</protein>
<dbReference type="EC" id="3.2.1.132"/>
<dbReference type="EMBL" id="L40408">
    <property type="protein sequence ID" value="AAA63405.1"/>
    <property type="molecule type" value="Genomic_DNA"/>
</dbReference>
<dbReference type="SMR" id="P48846"/>
<dbReference type="CAZy" id="GH46">
    <property type="family name" value="Glycoside Hydrolase Family 46"/>
</dbReference>
<dbReference type="GO" id="GO:0005576">
    <property type="term" value="C:extracellular region"/>
    <property type="evidence" value="ECO:0007669"/>
    <property type="project" value="UniProtKB-SubCell"/>
</dbReference>
<dbReference type="GO" id="GO:0016977">
    <property type="term" value="F:chitosanase activity"/>
    <property type="evidence" value="ECO:0007669"/>
    <property type="project" value="UniProtKB-EC"/>
</dbReference>
<dbReference type="GO" id="GO:0005975">
    <property type="term" value="P:carbohydrate metabolic process"/>
    <property type="evidence" value="ECO:0007669"/>
    <property type="project" value="InterPro"/>
</dbReference>
<dbReference type="CDD" id="cd00978">
    <property type="entry name" value="chitosanase_GH46"/>
    <property type="match status" value="1"/>
</dbReference>
<dbReference type="Gene3D" id="1.20.141.10">
    <property type="entry name" value="Chitosanase, subunit A, domain 1"/>
    <property type="match status" value="1"/>
</dbReference>
<dbReference type="Gene3D" id="3.30.386.10">
    <property type="entry name" value="Chitosanase, subunit A, domain 2"/>
    <property type="match status" value="1"/>
</dbReference>
<dbReference type="InterPro" id="IPR000400">
    <property type="entry name" value="Glyco_hydro_46"/>
</dbReference>
<dbReference type="InterPro" id="IPR023099">
    <property type="entry name" value="Glyco_hydro_46_N"/>
</dbReference>
<dbReference type="InterPro" id="IPR023346">
    <property type="entry name" value="Lysozyme-like_dom_sf"/>
</dbReference>
<dbReference type="Pfam" id="PF01374">
    <property type="entry name" value="Glyco_hydro_46"/>
    <property type="match status" value="1"/>
</dbReference>
<dbReference type="PIRSF" id="PIRSF036551">
    <property type="entry name" value="Chitosanase"/>
    <property type="match status" value="1"/>
</dbReference>
<dbReference type="SUPFAM" id="SSF53955">
    <property type="entry name" value="Lysozyme-like"/>
    <property type="match status" value="1"/>
</dbReference>
<dbReference type="PROSITE" id="PS60000">
    <property type="entry name" value="CHITOSANASE_46_80"/>
    <property type="match status" value="1"/>
</dbReference>